<feature type="chain" id="PRO_0000053504" description="Ecdysone-induced protein 75B, isoform A">
    <location>
        <begin position="1"/>
        <end position="1355"/>
    </location>
</feature>
<feature type="domain" description="NR LBD" evidence="2">
    <location>
        <begin position="508"/>
        <end position="756"/>
    </location>
</feature>
<feature type="DNA-binding region" description="Nuclear receptor" evidence="1">
    <location>
        <begin position="384"/>
        <end position="474"/>
    </location>
</feature>
<feature type="zinc finger region" description="NR C4-type; degenerate" evidence="1">
    <location>
        <begin position="387"/>
        <end position="421"/>
    </location>
</feature>
<feature type="zinc finger region" description="NR C4-type" evidence="1">
    <location>
        <begin position="438"/>
        <end position="457"/>
    </location>
</feature>
<feature type="region of interest" description="Disordered" evidence="3">
    <location>
        <begin position="60"/>
        <end position="91"/>
    </location>
</feature>
<feature type="region of interest" description="Disordered" evidence="3">
    <location>
        <begin position="126"/>
        <end position="228"/>
    </location>
</feature>
<feature type="region of interest" description="Disordered" evidence="3">
    <location>
        <begin position="248"/>
        <end position="268"/>
    </location>
</feature>
<feature type="region of interest" description="Disordered" evidence="3">
    <location>
        <begin position="308"/>
        <end position="344"/>
    </location>
</feature>
<feature type="region of interest" description="Disordered" evidence="3">
    <location>
        <begin position="780"/>
        <end position="821"/>
    </location>
</feature>
<feature type="region of interest" description="Disordered" evidence="3">
    <location>
        <begin position="927"/>
        <end position="964"/>
    </location>
</feature>
<feature type="region of interest" description="Disordered" evidence="3">
    <location>
        <begin position="987"/>
        <end position="1007"/>
    </location>
</feature>
<feature type="region of interest" description="Disordered" evidence="3">
    <location>
        <begin position="1051"/>
        <end position="1117"/>
    </location>
</feature>
<feature type="region of interest" description="Disordered" evidence="3">
    <location>
        <begin position="1147"/>
        <end position="1260"/>
    </location>
</feature>
<feature type="region of interest" description="Disordered" evidence="3">
    <location>
        <begin position="1312"/>
        <end position="1344"/>
    </location>
</feature>
<feature type="compositionally biased region" description="Basic residues" evidence="3">
    <location>
        <begin position="66"/>
        <end position="76"/>
    </location>
</feature>
<feature type="compositionally biased region" description="Low complexity" evidence="3">
    <location>
        <begin position="77"/>
        <end position="91"/>
    </location>
</feature>
<feature type="compositionally biased region" description="Low complexity" evidence="3">
    <location>
        <begin position="143"/>
        <end position="179"/>
    </location>
</feature>
<feature type="compositionally biased region" description="Acidic residues" evidence="3">
    <location>
        <begin position="200"/>
        <end position="213"/>
    </location>
</feature>
<feature type="compositionally biased region" description="Polar residues" evidence="3">
    <location>
        <begin position="218"/>
        <end position="228"/>
    </location>
</feature>
<feature type="compositionally biased region" description="Polar residues" evidence="3">
    <location>
        <begin position="254"/>
        <end position="264"/>
    </location>
</feature>
<feature type="compositionally biased region" description="Low complexity" evidence="3">
    <location>
        <begin position="308"/>
        <end position="321"/>
    </location>
</feature>
<feature type="compositionally biased region" description="Low complexity" evidence="3">
    <location>
        <begin position="330"/>
        <end position="344"/>
    </location>
</feature>
<feature type="compositionally biased region" description="Low complexity" evidence="3">
    <location>
        <begin position="797"/>
        <end position="809"/>
    </location>
</feature>
<feature type="compositionally biased region" description="Low complexity" evidence="3">
    <location>
        <begin position="948"/>
        <end position="960"/>
    </location>
</feature>
<feature type="compositionally biased region" description="Low complexity" evidence="3">
    <location>
        <begin position="987"/>
        <end position="1001"/>
    </location>
</feature>
<feature type="compositionally biased region" description="Low complexity" evidence="3">
    <location>
        <begin position="1053"/>
        <end position="1098"/>
    </location>
</feature>
<feature type="compositionally biased region" description="Low complexity" evidence="3">
    <location>
        <begin position="1106"/>
        <end position="1117"/>
    </location>
</feature>
<feature type="compositionally biased region" description="Polar residues" evidence="3">
    <location>
        <begin position="1149"/>
        <end position="1162"/>
    </location>
</feature>
<feature type="compositionally biased region" description="Polar residues" evidence="3">
    <location>
        <begin position="1174"/>
        <end position="1196"/>
    </location>
</feature>
<feature type="compositionally biased region" description="Low complexity" evidence="3">
    <location>
        <begin position="1197"/>
        <end position="1233"/>
    </location>
</feature>
<feature type="compositionally biased region" description="Low complexity" evidence="3">
    <location>
        <begin position="1242"/>
        <end position="1260"/>
    </location>
</feature>
<feature type="compositionally biased region" description="Low complexity" evidence="3">
    <location>
        <begin position="1315"/>
        <end position="1343"/>
    </location>
</feature>
<feature type="sequence conflict" description="In Ref. 1; CAA35924." evidence="5" ref="1">
    <original>S</original>
    <variation>C</variation>
    <location>
        <position position="206"/>
    </location>
</feature>
<feature type="sequence conflict" description="In Ref. 1; CAA35924." evidence="5" ref="1">
    <original>L</original>
    <variation>LL</variation>
    <location>
        <position position="244"/>
    </location>
</feature>
<accession>P17672</accession>
<accession>Q8IQS2</accession>
<organism>
    <name type="scientific">Drosophila melanogaster</name>
    <name type="common">Fruit fly</name>
    <dbReference type="NCBI Taxonomy" id="7227"/>
    <lineage>
        <taxon>Eukaryota</taxon>
        <taxon>Metazoa</taxon>
        <taxon>Ecdysozoa</taxon>
        <taxon>Arthropoda</taxon>
        <taxon>Hexapoda</taxon>
        <taxon>Insecta</taxon>
        <taxon>Pterygota</taxon>
        <taxon>Neoptera</taxon>
        <taxon>Endopterygota</taxon>
        <taxon>Diptera</taxon>
        <taxon>Brachycera</taxon>
        <taxon>Muscomorpha</taxon>
        <taxon>Ephydroidea</taxon>
        <taxon>Drosophilidae</taxon>
        <taxon>Drosophila</taxon>
        <taxon>Sophophora</taxon>
    </lineage>
</organism>
<name>E75BA_DROME</name>
<proteinExistence type="evidence at transcript level"/>
<protein>
    <recommendedName>
        <fullName>Ecdysone-induced protein 75B, isoform A</fullName>
        <shortName>E75-B</shortName>
    </recommendedName>
    <alternativeName>
        <fullName>Nuclear receptor subfamily 1 group D member 3, isoform A</fullName>
    </alternativeName>
</protein>
<keyword id="KW-0025">Alternative splicing</keyword>
<keyword id="KW-0217">Developmental protein</keyword>
<keyword id="KW-0238">DNA-binding</keyword>
<keyword id="KW-0479">Metal-binding</keyword>
<keyword id="KW-0539">Nucleus</keyword>
<keyword id="KW-0675">Receptor</keyword>
<keyword id="KW-1185">Reference proteome</keyword>
<keyword id="KW-0804">Transcription</keyword>
<keyword id="KW-0805">Transcription regulation</keyword>
<keyword id="KW-0862">Zinc</keyword>
<keyword id="KW-0863">Zinc-finger</keyword>
<reference key="1">
    <citation type="journal article" date="1990" name="Genes Dev.">
        <title>The E75 ecdysone-inducible gene responsible for the 75B early puff in Drosophila encodes two new members of the steroid receptor superfamily.</title>
        <authorList>
            <person name="Segraves W.A."/>
            <person name="Hogness D.S."/>
        </authorList>
    </citation>
    <scope>NUCLEOTIDE SEQUENCE [MRNA]</scope>
    <scope>ALTERNATIVE SPLICING</scope>
    <source>
        <strain>Canton-S</strain>
    </source>
</reference>
<reference key="2">
    <citation type="journal article" date="2000" name="Science">
        <title>The genome sequence of Drosophila melanogaster.</title>
        <authorList>
            <person name="Adams M.D."/>
            <person name="Celniker S.E."/>
            <person name="Holt R.A."/>
            <person name="Evans C.A."/>
            <person name="Gocayne J.D."/>
            <person name="Amanatides P.G."/>
            <person name="Scherer S.E."/>
            <person name="Li P.W."/>
            <person name="Hoskins R.A."/>
            <person name="Galle R.F."/>
            <person name="George R.A."/>
            <person name="Lewis S.E."/>
            <person name="Richards S."/>
            <person name="Ashburner M."/>
            <person name="Henderson S.N."/>
            <person name="Sutton G.G."/>
            <person name="Wortman J.R."/>
            <person name="Yandell M.D."/>
            <person name="Zhang Q."/>
            <person name="Chen L.X."/>
            <person name="Brandon R.C."/>
            <person name="Rogers Y.-H.C."/>
            <person name="Blazej R.G."/>
            <person name="Champe M."/>
            <person name="Pfeiffer B.D."/>
            <person name="Wan K.H."/>
            <person name="Doyle C."/>
            <person name="Baxter E.G."/>
            <person name="Helt G."/>
            <person name="Nelson C.R."/>
            <person name="Miklos G.L.G."/>
            <person name="Abril J.F."/>
            <person name="Agbayani A."/>
            <person name="An H.-J."/>
            <person name="Andrews-Pfannkoch C."/>
            <person name="Baldwin D."/>
            <person name="Ballew R.M."/>
            <person name="Basu A."/>
            <person name="Baxendale J."/>
            <person name="Bayraktaroglu L."/>
            <person name="Beasley E.M."/>
            <person name="Beeson K.Y."/>
            <person name="Benos P.V."/>
            <person name="Berman B.P."/>
            <person name="Bhandari D."/>
            <person name="Bolshakov S."/>
            <person name="Borkova D."/>
            <person name="Botchan M.R."/>
            <person name="Bouck J."/>
            <person name="Brokstein P."/>
            <person name="Brottier P."/>
            <person name="Burtis K.C."/>
            <person name="Busam D.A."/>
            <person name="Butler H."/>
            <person name="Cadieu E."/>
            <person name="Center A."/>
            <person name="Chandra I."/>
            <person name="Cherry J.M."/>
            <person name="Cawley S."/>
            <person name="Dahlke C."/>
            <person name="Davenport L.B."/>
            <person name="Davies P."/>
            <person name="de Pablos B."/>
            <person name="Delcher A."/>
            <person name="Deng Z."/>
            <person name="Mays A.D."/>
            <person name="Dew I."/>
            <person name="Dietz S.M."/>
            <person name="Dodson K."/>
            <person name="Doup L.E."/>
            <person name="Downes M."/>
            <person name="Dugan-Rocha S."/>
            <person name="Dunkov B.C."/>
            <person name="Dunn P."/>
            <person name="Durbin K.J."/>
            <person name="Evangelista C.C."/>
            <person name="Ferraz C."/>
            <person name="Ferriera S."/>
            <person name="Fleischmann W."/>
            <person name="Fosler C."/>
            <person name="Gabrielian A.E."/>
            <person name="Garg N.S."/>
            <person name="Gelbart W.M."/>
            <person name="Glasser K."/>
            <person name="Glodek A."/>
            <person name="Gong F."/>
            <person name="Gorrell J.H."/>
            <person name="Gu Z."/>
            <person name="Guan P."/>
            <person name="Harris M."/>
            <person name="Harris N.L."/>
            <person name="Harvey D.A."/>
            <person name="Heiman T.J."/>
            <person name="Hernandez J.R."/>
            <person name="Houck J."/>
            <person name="Hostin D."/>
            <person name="Houston K.A."/>
            <person name="Howland T.J."/>
            <person name="Wei M.-H."/>
            <person name="Ibegwam C."/>
            <person name="Jalali M."/>
            <person name="Kalush F."/>
            <person name="Karpen G.H."/>
            <person name="Ke Z."/>
            <person name="Kennison J.A."/>
            <person name="Ketchum K.A."/>
            <person name="Kimmel B.E."/>
            <person name="Kodira C.D."/>
            <person name="Kraft C.L."/>
            <person name="Kravitz S."/>
            <person name="Kulp D."/>
            <person name="Lai Z."/>
            <person name="Lasko P."/>
            <person name="Lei Y."/>
            <person name="Levitsky A.A."/>
            <person name="Li J.H."/>
            <person name="Li Z."/>
            <person name="Liang Y."/>
            <person name="Lin X."/>
            <person name="Liu X."/>
            <person name="Mattei B."/>
            <person name="McIntosh T.C."/>
            <person name="McLeod M.P."/>
            <person name="McPherson D."/>
            <person name="Merkulov G."/>
            <person name="Milshina N.V."/>
            <person name="Mobarry C."/>
            <person name="Morris J."/>
            <person name="Moshrefi A."/>
            <person name="Mount S.M."/>
            <person name="Moy M."/>
            <person name="Murphy B."/>
            <person name="Murphy L."/>
            <person name="Muzny D.M."/>
            <person name="Nelson D.L."/>
            <person name="Nelson D.R."/>
            <person name="Nelson K.A."/>
            <person name="Nixon K."/>
            <person name="Nusskern D.R."/>
            <person name="Pacleb J.M."/>
            <person name="Palazzolo M."/>
            <person name="Pittman G.S."/>
            <person name="Pan S."/>
            <person name="Pollard J."/>
            <person name="Puri V."/>
            <person name="Reese M.G."/>
            <person name="Reinert K."/>
            <person name="Remington K."/>
            <person name="Saunders R.D.C."/>
            <person name="Scheeler F."/>
            <person name="Shen H."/>
            <person name="Shue B.C."/>
            <person name="Siden-Kiamos I."/>
            <person name="Simpson M."/>
            <person name="Skupski M.P."/>
            <person name="Smith T.J."/>
            <person name="Spier E."/>
            <person name="Spradling A.C."/>
            <person name="Stapleton M."/>
            <person name="Strong R."/>
            <person name="Sun E."/>
            <person name="Svirskas R."/>
            <person name="Tector C."/>
            <person name="Turner R."/>
            <person name="Venter E."/>
            <person name="Wang A.H."/>
            <person name="Wang X."/>
            <person name="Wang Z.-Y."/>
            <person name="Wassarman D.A."/>
            <person name="Weinstock G.M."/>
            <person name="Weissenbach J."/>
            <person name="Williams S.M."/>
            <person name="Woodage T."/>
            <person name="Worley K.C."/>
            <person name="Wu D."/>
            <person name="Yang S."/>
            <person name="Yao Q.A."/>
            <person name="Ye J."/>
            <person name="Yeh R.-F."/>
            <person name="Zaveri J.S."/>
            <person name="Zhan M."/>
            <person name="Zhang G."/>
            <person name="Zhao Q."/>
            <person name="Zheng L."/>
            <person name="Zheng X.H."/>
            <person name="Zhong F.N."/>
            <person name="Zhong W."/>
            <person name="Zhou X."/>
            <person name="Zhu S.C."/>
            <person name="Zhu X."/>
            <person name="Smith H.O."/>
            <person name="Gibbs R.A."/>
            <person name="Myers E.W."/>
            <person name="Rubin G.M."/>
            <person name="Venter J.C."/>
        </authorList>
    </citation>
    <scope>NUCLEOTIDE SEQUENCE [LARGE SCALE GENOMIC DNA]</scope>
    <source>
        <strain>Berkeley</strain>
    </source>
</reference>
<reference key="3">
    <citation type="journal article" date="2002" name="Genome Biol.">
        <title>Annotation of the Drosophila melanogaster euchromatic genome: a systematic review.</title>
        <authorList>
            <person name="Misra S."/>
            <person name="Crosby M.A."/>
            <person name="Mungall C.J."/>
            <person name="Matthews B.B."/>
            <person name="Campbell K.S."/>
            <person name="Hradecky P."/>
            <person name="Huang Y."/>
            <person name="Kaminker J.S."/>
            <person name="Millburn G.H."/>
            <person name="Prochnik S.E."/>
            <person name="Smith C.D."/>
            <person name="Tupy J.L."/>
            <person name="Whitfield E.J."/>
            <person name="Bayraktaroglu L."/>
            <person name="Berman B.P."/>
            <person name="Bettencourt B.R."/>
            <person name="Celniker S.E."/>
            <person name="de Grey A.D.N.J."/>
            <person name="Drysdale R.A."/>
            <person name="Harris N.L."/>
            <person name="Richter J."/>
            <person name="Russo S."/>
            <person name="Schroeder A.J."/>
            <person name="Shu S.Q."/>
            <person name="Stapleton M."/>
            <person name="Yamada C."/>
            <person name="Ashburner M."/>
            <person name="Gelbart W.M."/>
            <person name="Rubin G.M."/>
            <person name="Lewis S.E."/>
        </authorList>
    </citation>
    <scope>GENOME REANNOTATION</scope>
    <scope>ALTERNATIVE SPLICING</scope>
    <source>
        <strain>Berkeley</strain>
    </source>
</reference>
<reference key="4">
    <citation type="journal article" date="1993" name="Development">
        <title>Puffs and PCR: the in vivo dynamics of early gene expression during ecdysone responses in Drosophila.</title>
        <authorList>
            <person name="Huet F."/>
            <person name="Ruiz C."/>
            <person name="Richards G."/>
        </authorList>
    </citation>
    <scope>FUNCTION</scope>
    <scope>DEVELOPMENTAL STAGE</scope>
    <scope>INDUCTION</scope>
</reference>
<dbReference type="EMBL" id="X51549">
    <property type="protein sequence ID" value="CAA35924.1"/>
    <property type="status" value="ALT_FRAME"/>
    <property type="molecule type" value="mRNA"/>
</dbReference>
<dbReference type="EMBL" id="AE014296">
    <property type="protein sequence ID" value="AAN11688.1"/>
    <property type="molecule type" value="Genomic_DNA"/>
</dbReference>
<dbReference type="PIR" id="B34598">
    <property type="entry name" value="B34598"/>
</dbReference>
<dbReference type="RefSeq" id="NP_524133.2">
    <molecule id="P17672-1"/>
    <property type="nucleotide sequence ID" value="NM_079409.3"/>
</dbReference>
<dbReference type="SMR" id="P17672"/>
<dbReference type="BioGRID" id="65284">
    <property type="interactions" value="19"/>
</dbReference>
<dbReference type="IntAct" id="P17672">
    <property type="interactions" value="4"/>
</dbReference>
<dbReference type="DNASU" id="39999"/>
<dbReference type="EnsemblMetazoa" id="FBtr0075150">
    <molecule id="P17672-1"/>
    <property type="protein sequence ID" value="FBpp0074916"/>
    <property type="gene ID" value="FBgn0000568"/>
</dbReference>
<dbReference type="GeneID" id="39999"/>
<dbReference type="AGR" id="FB:FBgn0000568"/>
<dbReference type="CTD" id="39999"/>
<dbReference type="FlyBase" id="FBgn0000568">
    <property type="gene designation" value="Eip75B"/>
</dbReference>
<dbReference type="VEuPathDB" id="VectorBase:FBgn0000568"/>
<dbReference type="HOGENOM" id="CLU_004897_0_0_1"/>
<dbReference type="OrthoDB" id="7634782at2759"/>
<dbReference type="PhylomeDB" id="P17672"/>
<dbReference type="SignaLink" id="P17672"/>
<dbReference type="BioGRID-ORCS" id="39999">
    <property type="hits" value="1 hit in 3 CRISPR screens"/>
</dbReference>
<dbReference type="ChiTaRS" id="Eip75B">
    <property type="organism name" value="fly"/>
</dbReference>
<dbReference type="GenomeRNAi" id="39999"/>
<dbReference type="Proteomes" id="UP000000803">
    <property type="component" value="Chromosome 3L"/>
</dbReference>
<dbReference type="Bgee" id="FBgn0000568">
    <property type="expression patterns" value="Expressed in epithelial cell in haltere and 290 other cell types or tissues"/>
</dbReference>
<dbReference type="ExpressionAtlas" id="P17672">
    <property type="expression patterns" value="baseline and differential"/>
</dbReference>
<dbReference type="GO" id="GO:0005634">
    <property type="term" value="C:nucleus"/>
    <property type="evidence" value="ECO:0000314"/>
    <property type="project" value="FlyBase"/>
</dbReference>
<dbReference type="GO" id="GO:0003677">
    <property type="term" value="F:DNA binding"/>
    <property type="evidence" value="ECO:0000314"/>
    <property type="project" value="FlyBase"/>
</dbReference>
<dbReference type="GO" id="GO:0020037">
    <property type="term" value="F:heme binding"/>
    <property type="evidence" value="ECO:0000314"/>
    <property type="project" value="FlyBase"/>
</dbReference>
<dbReference type="GO" id="GO:0004879">
    <property type="term" value="F:nuclear receptor activity"/>
    <property type="evidence" value="ECO:0000318"/>
    <property type="project" value="GO_Central"/>
</dbReference>
<dbReference type="GO" id="GO:0000978">
    <property type="term" value="F:RNA polymerase II cis-regulatory region sequence-specific DNA binding"/>
    <property type="evidence" value="ECO:0000318"/>
    <property type="project" value="GO_Central"/>
</dbReference>
<dbReference type="GO" id="GO:0008270">
    <property type="term" value="F:zinc ion binding"/>
    <property type="evidence" value="ECO:0007669"/>
    <property type="project" value="UniProtKB-KW"/>
</dbReference>
<dbReference type="GO" id="GO:0030154">
    <property type="term" value="P:cell differentiation"/>
    <property type="evidence" value="ECO:0000318"/>
    <property type="project" value="GO_Central"/>
</dbReference>
<dbReference type="GO" id="GO:0018990">
    <property type="term" value="P:ecdysis, chitin-based cuticle"/>
    <property type="evidence" value="ECO:0000315"/>
    <property type="project" value="FlyBase"/>
</dbReference>
<dbReference type="GO" id="GO:0009755">
    <property type="term" value="P:hormone-mediated signaling pathway"/>
    <property type="evidence" value="ECO:0000318"/>
    <property type="project" value="GO_Central"/>
</dbReference>
<dbReference type="GO" id="GO:0030522">
    <property type="term" value="P:intracellular receptor signaling pathway"/>
    <property type="evidence" value="ECO:0000318"/>
    <property type="project" value="GO_Central"/>
</dbReference>
<dbReference type="GO" id="GO:0007591">
    <property type="term" value="P:molting cycle, chitin-based cuticle"/>
    <property type="evidence" value="ECO:0000315"/>
    <property type="project" value="FlyBase"/>
</dbReference>
<dbReference type="GO" id="GO:0000122">
    <property type="term" value="P:negative regulation of transcription by RNA polymerase II"/>
    <property type="evidence" value="ECO:0000250"/>
    <property type="project" value="FlyBase"/>
</dbReference>
<dbReference type="GO" id="GO:0048477">
    <property type="term" value="P:oogenesis"/>
    <property type="evidence" value="ECO:0000303"/>
    <property type="project" value="FlyBase"/>
</dbReference>
<dbReference type="GO" id="GO:0045944">
    <property type="term" value="P:positive regulation of transcription by RNA polymerase II"/>
    <property type="evidence" value="ECO:0000318"/>
    <property type="project" value="GO_Central"/>
</dbReference>
<dbReference type="GO" id="GO:0007553">
    <property type="term" value="P:regulation of ecdysteroid metabolic process"/>
    <property type="evidence" value="ECO:0000315"/>
    <property type="project" value="FlyBase"/>
</dbReference>
<dbReference type="GO" id="GO:0010468">
    <property type="term" value="P:regulation of gene expression"/>
    <property type="evidence" value="ECO:0000314"/>
    <property type="project" value="FlyBase"/>
</dbReference>
<dbReference type="GO" id="GO:0035075">
    <property type="term" value="P:response to ecdysone"/>
    <property type="evidence" value="ECO:0000315"/>
    <property type="project" value="FlyBase"/>
</dbReference>
<dbReference type="CDD" id="cd06940">
    <property type="entry name" value="NR_LBD_REV_ERB"/>
    <property type="match status" value="1"/>
</dbReference>
<dbReference type="FunFam" id="1.10.565.10:FF:000029">
    <property type="entry name" value="Ecdysone-induced protein 75B, isoform B"/>
    <property type="match status" value="1"/>
</dbReference>
<dbReference type="Gene3D" id="3.30.50.10">
    <property type="entry name" value="Erythroid Transcription Factor GATA-1, subunit A"/>
    <property type="match status" value="1"/>
</dbReference>
<dbReference type="Gene3D" id="1.10.565.10">
    <property type="entry name" value="Retinoid X Receptor"/>
    <property type="match status" value="1"/>
</dbReference>
<dbReference type="InterPro" id="IPR035500">
    <property type="entry name" value="NHR-like_dom_sf"/>
</dbReference>
<dbReference type="InterPro" id="IPR000536">
    <property type="entry name" value="Nucl_hrmn_rcpt_lig-bd"/>
</dbReference>
<dbReference type="InterPro" id="IPR050234">
    <property type="entry name" value="Nuclear_hormone_rcpt_NR1"/>
</dbReference>
<dbReference type="InterPro" id="IPR001723">
    <property type="entry name" value="Nuclear_hrmn_rcpt"/>
</dbReference>
<dbReference type="InterPro" id="IPR001728">
    <property type="entry name" value="ThyrH_rcpt"/>
</dbReference>
<dbReference type="InterPro" id="IPR001628">
    <property type="entry name" value="Znf_hrmn_rcpt"/>
</dbReference>
<dbReference type="InterPro" id="IPR013088">
    <property type="entry name" value="Znf_NHR/GATA"/>
</dbReference>
<dbReference type="PANTHER" id="PTHR24082:SF473">
    <property type="entry name" value="ECDYSONE-INDUCED PROTEIN 75B, ISOFORM B"/>
    <property type="match status" value="1"/>
</dbReference>
<dbReference type="PANTHER" id="PTHR24082">
    <property type="entry name" value="NUCLEAR HORMONE RECEPTOR"/>
    <property type="match status" value="1"/>
</dbReference>
<dbReference type="Pfam" id="PF00104">
    <property type="entry name" value="Hormone_recep"/>
    <property type="match status" value="1"/>
</dbReference>
<dbReference type="Pfam" id="PF00105">
    <property type="entry name" value="zf-C4"/>
    <property type="match status" value="1"/>
</dbReference>
<dbReference type="PRINTS" id="PR00398">
    <property type="entry name" value="STRDHORMONER"/>
</dbReference>
<dbReference type="PRINTS" id="PR00546">
    <property type="entry name" value="THYROIDHORMR"/>
</dbReference>
<dbReference type="SMART" id="SM00430">
    <property type="entry name" value="HOLI"/>
    <property type="match status" value="1"/>
</dbReference>
<dbReference type="SMART" id="SM00399">
    <property type="entry name" value="ZnF_C4"/>
    <property type="match status" value="1"/>
</dbReference>
<dbReference type="SUPFAM" id="SSF57716">
    <property type="entry name" value="Glucocorticoid receptor-like (DNA-binding domain)"/>
    <property type="match status" value="1"/>
</dbReference>
<dbReference type="SUPFAM" id="SSF48508">
    <property type="entry name" value="Nuclear receptor ligand-binding domain"/>
    <property type="match status" value="1"/>
</dbReference>
<dbReference type="PROSITE" id="PS51843">
    <property type="entry name" value="NR_LBD"/>
    <property type="match status" value="1"/>
</dbReference>
<dbReference type="PROSITE" id="PS51030">
    <property type="entry name" value="NUCLEAR_REC_DBD_2"/>
    <property type="match status" value="1"/>
</dbReference>
<evidence type="ECO:0000255" key="1">
    <source>
        <dbReference type="PROSITE-ProRule" id="PRU00407"/>
    </source>
</evidence>
<evidence type="ECO:0000255" key="2">
    <source>
        <dbReference type="PROSITE-ProRule" id="PRU01189"/>
    </source>
</evidence>
<evidence type="ECO:0000256" key="3">
    <source>
        <dbReference type="SAM" id="MobiDB-lite"/>
    </source>
</evidence>
<evidence type="ECO:0000269" key="4">
    <source>
    </source>
</evidence>
<evidence type="ECO:0000305" key="5"/>
<comment type="function">
    <text evidence="4">Implicated in the regulation of ecdysone-triggered gene hierarchies. Probably plays a key role in mediating the regulation of the larval molt by 20-OH-ecdysone.</text>
</comment>
<comment type="subcellular location">
    <subcellularLocation>
        <location evidence="1">Nucleus</location>
    </subcellularLocation>
</comment>
<comment type="alternative products">
    <event type="alternative splicing"/>
    <isoform>
        <id>P17672-1</id>
        <name>A</name>
        <name>E75B</name>
        <sequence type="displayed"/>
    </isoform>
    <isoform>
        <id>P17671-1</id>
        <name>C</name>
        <name>E75A</name>
        <sequence type="external"/>
    </isoform>
    <isoform>
        <id>P13055-2</id>
        <name>B</name>
        <name>E75C</name>
        <sequence type="external"/>
    </isoform>
    <isoform>
        <id>P17671-2</id>
        <name>D</name>
        <sequence type="external"/>
    </isoform>
</comment>
<comment type="developmental stage">
    <text evidence="4">In mid instar larvae salivary glands, levels are low during puff stage 1, increase during puff stages 2-4 and diminish from stage 5 onwards. In prepupae, isoform A is the predominant form during puff stage 19 and the transition to stage 20. By stage 3 it is present in the gut, Malpighian tubules and the fat body, levels persist beyond stage 11.</text>
</comment>
<comment type="induction">
    <text evidence="4">The expression of this protein is developmentally regulated and is correlated with the 20-OH-ecdysone induced activity of puff 75B.</text>
</comment>
<comment type="similarity">
    <text evidence="5">Belongs to the nuclear hormone receptor family. NR1 subfamily.</text>
</comment>
<comment type="sequence caution" evidence="5">
    <conflict type="frameshift">
        <sequence resource="EMBL-CDS" id="CAA35924"/>
    </conflict>
</comment>
<sequence>MVCAMQEVAAVQHQQQQQQLQLPQQQQQQQQTTQQQHATTIVLLTGNGGGNLHIVATPQQHQPMHQLHHQHQHQHQHQQQAKSQQLKQQHSALVKLLESAPIKQQQQTPKQIVYLQQQQQQPQRKRLKNEAAIVQQQQQTPATLVKTTTTSNSNSNNTQTTNSISQQQQQHQIVLQHQQPAAAATPKPCADLSAKNDSESGIDEDSPNSDEDCPNANPAGTSLEDSSYEQYQCPWKKIRYARELKQRELEQQQTTGGSNAQQQVEAKPAAIPTSNIKQLHCDSPFSAQTHKEIANLLRQQSQQQQVVATQQQQQQQQQHQHQQQRRDSSDSNCSLMSNSSNSSAGNCCTCNAGDDQQLEEMDEAHDSGCDDELCEQHHQRLDSSQLNYLCQKFDEKLDTALSNSSANTGRNTPAVTANEDADGFFRRSIQQKIQYRPCTKNQQCSILRINRNRCQYCRLKKCIAVGMSRDAVRFGRVPKREKARILAAMQQSTQNRGQQRALATELDDQPRLLAAVLRAHLETCEFTKEKVSAMRQRARDCPSYSMPTLLACPLNPAPELQSEQEFSQRFAHVIRGVIDFAGMIPGFQLLTQDDKFTLLKAGLFDALFVRLICMFDSSINSIICLNGQVMRRDAIQNGANARFLVDSTFNFAERMNSMNLTDAEIGLFCAIVLITPDRPGLRNLELIEKMYSRLKGCLQYIVAQNRPDQPEFLAKLLETMPDLRTLSTLHTEKLVVFRTEHKELLRQQMWSMEDGNNSDGQQNKSPSGSWADAMDVEAAKSPLGSVSSTESADLDYGSPSSSQPQGVSLPSPPQQQPSALASSAPLLAATLSGGCPLRNRANSGSSGDSGAAEMDIVGSHAHLTQNGLTITPIVRHQQQQQQQQQIGILNNAHSRNLNGGHAMCQQQQQHPQLHHHLTAGAARYRKLDSPTDSGIESGNEKNECKAVSSGGSSSCSSPRSSVDDALDCSDAAANHNQVVQHPQLSVVSVSPVRSPQPSTSSHLKRQIVEDMPVLKRVLQAPPLYDTNSLMDEAYKPHKKFRALRHREFETAEADASSSTSGSNSLSAGSPRQSPVPNSVATPPPSAASAAAGNPAQSQLHMHLTRSSPKASMASSHSVLAKSLMAEPRMTPEQMKRSDIIQNYLKRENSTAASSTTNGVGNRSPSSSSTPPPSAVQNQQRWGSSSVITTTCQQRQQSVSPHSNGSSSSSSSSSSSSSSSSSTSSNCSSSSASSCQYFQSPHSTSNGTSAPASSSSGSNSATPLLELQVDIADSAQPLNLSKKSPTPPPSKLHALVAAANAVQRYPTLSADVTVTASNGGPPSAAASPAPSSSPPASVGSPNPGLSAAVHKVMLEA</sequence>
<gene>
    <name type="primary">Eip75B</name>
    <name type="synonym">NR1D3</name>
    <name type="ORF">CG8127</name>
</gene>